<reference key="1">
    <citation type="journal article" date="1992" name="Virology">
        <title>The nucleotide sequence of apple stem grooving capillovirus genome.</title>
        <authorList>
            <person name="Yoshikawa N."/>
            <person name="Sasaki E."/>
            <person name="Kato M."/>
            <person name="Takahashi T."/>
        </authorList>
    </citation>
    <scope>NUCLEOTIDE SEQUENCE [GENOMIC RNA]</scope>
</reference>
<organism>
    <name type="scientific">Apple stem grooving virus (strain P-209)</name>
    <name type="common">ASGV</name>
    <dbReference type="NCBI Taxonomy" id="36402"/>
    <lineage>
        <taxon>Viruses</taxon>
        <taxon>Riboviria</taxon>
        <taxon>Orthornavirae</taxon>
        <taxon>Kitrinoviricota</taxon>
        <taxon>Alsuviricetes</taxon>
        <taxon>Tymovirales</taxon>
        <taxon>Betaflexiviridae</taxon>
        <taxon>Trivirinae</taxon>
        <taxon>Capillovirus</taxon>
        <taxon>Capillovirus mali</taxon>
    </lineage>
</organism>
<feature type="chain" id="PRO_0000040221" description="Putative RNA-directed RNA polymerase/helicase" evidence="1">
    <location>
        <begin position="1"/>
        <end position="1868"/>
    </location>
</feature>
<feature type="chain" id="PRO_0000040222" description="Coat protein" evidence="1">
    <location>
        <begin position="1869"/>
        <end position="2105"/>
    </location>
</feature>
<feature type="domain" description="Alphavirus-like MT" evidence="3">
    <location>
        <begin position="63"/>
        <end position="250"/>
    </location>
</feature>
<feature type="domain" description="(+)RNA virus helicase ATP-binding">
    <location>
        <begin position="753"/>
        <end position="929"/>
    </location>
</feature>
<feature type="domain" description="(+)RNA virus helicase C-terminal">
    <location>
        <begin position="930"/>
        <end position="1067"/>
    </location>
</feature>
<feature type="domain" description="RdRp catalytic" evidence="2">
    <location>
        <begin position="1358"/>
        <end position="1466"/>
    </location>
</feature>
<feature type="region of interest" description="Disordered" evidence="4">
    <location>
        <begin position="529"/>
        <end position="548"/>
    </location>
</feature>
<feature type="region of interest" description="Disordered" evidence="4">
    <location>
        <begin position="555"/>
        <end position="577"/>
    </location>
</feature>
<feature type="region of interest" description="V-region">
    <location>
        <begin position="1585"/>
        <end position="1868"/>
    </location>
</feature>
<feature type="region of interest" description="Disordered" evidence="4">
    <location>
        <begin position="1960"/>
        <end position="1979"/>
    </location>
</feature>
<feature type="compositionally biased region" description="Polar residues" evidence="4">
    <location>
        <begin position="530"/>
        <end position="543"/>
    </location>
</feature>
<feature type="compositionally biased region" description="Basic and acidic residues" evidence="4">
    <location>
        <begin position="555"/>
        <end position="566"/>
    </location>
</feature>
<feature type="compositionally biased region" description="Basic and acidic residues" evidence="4">
    <location>
        <begin position="1964"/>
        <end position="1973"/>
    </location>
</feature>
<feature type="binding site" evidence="1">
    <location>
        <begin position="781"/>
        <end position="788"/>
    </location>
    <ligand>
        <name>ATP</name>
        <dbReference type="ChEBI" id="CHEBI:30616"/>
    </ligand>
</feature>
<keyword id="KW-0067">ATP-binding</keyword>
<keyword id="KW-0167">Capsid protein</keyword>
<keyword id="KW-0347">Helicase</keyword>
<keyword id="KW-0378">Hydrolase</keyword>
<keyword id="KW-0511">Multifunctional enzyme</keyword>
<keyword id="KW-0547">Nucleotide-binding</keyword>
<keyword id="KW-0548">Nucleotidyltransferase</keyword>
<keyword id="KW-1185">Reference proteome</keyword>
<keyword id="KW-0696">RNA-directed RNA polymerase</keyword>
<keyword id="KW-0808">Transferase</keyword>
<keyword id="KW-0693">Viral RNA replication</keyword>
<keyword id="KW-0946">Virion</keyword>
<comment type="function">
    <molecule>Putative RNA-directed RNA polymerase/helicase</molecule>
    <text>Replicates genomic RNA, and might as well transcribe a subgenomic RNA coding for coat protein.</text>
</comment>
<comment type="function">
    <text>Coat protein: encapsidates the viral genome. Forms particles of very flexuous filaments, 619 nm long and 12 nm in width, with obvious cross-banding, helical symmetry and a pitch of c. 3.8 nm. Synthesis remains unclear: either by cleavage of the ORF1 polyprotein, or by translation of a subgenomic RNA.</text>
</comment>
<comment type="catalytic activity">
    <reaction evidence="2">
        <text>RNA(n) + a ribonucleoside 5'-triphosphate = RNA(n+1) + diphosphate</text>
        <dbReference type="Rhea" id="RHEA:21248"/>
        <dbReference type="Rhea" id="RHEA-COMP:14527"/>
        <dbReference type="Rhea" id="RHEA-COMP:17342"/>
        <dbReference type="ChEBI" id="CHEBI:33019"/>
        <dbReference type="ChEBI" id="CHEBI:61557"/>
        <dbReference type="ChEBI" id="CHEBI:140395"/>
        <dbReference type="EC" id="2.7.7.48"/>
    </reaction>
</comment>
<comment type="catalytic activity">
    <reaction>
        <text>ATP + H2O = ADP + phosphate + H(+)</text>
        <dbReference type="Rhea" id="RHEA:13065"/>
        <dbReference type="ChEBI" id="CHEBI:15377"/>
        <dbReference type="ChEBI" id="CHEBI:15378"/>
        <dbReference type="ChEBI" id="CHEBI:30616"/>
        <dbReference type="ChEBI" id="CHEBI:43474"/>
        <dbReference type="ChEBI" id="CHEBI:456216"/>
        <dbReference type="EC" id="3.6.4.13"/>
    </reaction>
</comment>
<comment type="subcellular location">
    <molecule>Coat protein</molecule>
    <subcellularLocation>
        <location evidence="5">Virion</location>
    </subcellularLocation>
</comment>
<comment type="domain">
    <text>The V-region of the ORF1-encoded protein between the polymerase and the CP, that encodes ORF2 in another frame does not have any functional motifs found in other known plant virus genomes. This region shows high variability among isolates and sequence variants.</text>
</comment>
<comment type="PTM">
    <text>The N-terminus of the coat protein is blocked.</text>
</comment>
<sequence length="2105" mass="241242">MAFTYRNPLEIAINKLPSKQSDQLLSLTTDEIEKTLEVTNRFFSFSITPEDQELLTKHGLTLAPIGFKSHSHPISKMIENHLLYICVPSLLSSFKSVAFFSLRENKVDSFLKMHSVFSHGKIKSLGMYNAIIDGKDKYRYGDVEFSSFRDRVIGLRDQCLTRNKFPKVLFLHDELHFLSPFDMAFLFETIPEIDRVVATTVFPIELLFGDKVSKEPRVYTYKVHGSSFSFYPDGVASECYEQNLANSKWPFTCSGIQWANRKIRVTKLQSLFAHHVFSFDRGRACNEFNHFDKPSCLLAEEMRLLTKRFDKAVINRSTVSSLSTYMACLKTANAASAVAKLRQLEKRDLYPDELNFVYSFGEHFKNFGMRDDFDVSVLQWVKDKFCQVMPHFIAASFFEPTEFHLNMRKLLNDLATKGIEVPLSVIILDKVNFIETRFHARMFDIAQAIGVNLDLLGKRFDYEAESEEYFSENGYIFMPSKSNPERNWILNSGSLKIDYSRLVRARRFRLRRDFLDPISKGKSPRKQLFLESTGNIKSNPNAEKNSESGEIKIEGSAENDQPHEVSHTSMETEDGQGFEGSIPVDLINCFEPEEIKLPKRRRKNDCVFKAISAHLGIDSQDLLNFLVNEDISDELLDCIEEDKGLSHEMIEEVLITKGLSMVYTSDFKEMAVLNRKYGVNGKMYCTIKGNHCELSSKECFIRLLKEGGEAQMSNENLNADSLFDLGRFVHNRDRAVKLAKSMARGTTGLLNEFDLEFCKNMVTLSELFPENFSSVVGLRLGFAGSGKTHKVLQWINYTPSVKRMFISPRRMLADEVEPQLKGTACQVHTWETALKKIDGTFMEVFVDEIGLYPPGYLTLLQMCAFRKIVKGQSENFLKGKLLELSKTCLNIRCFGDPLQLRYYSAEDTNLLDKTHDIDLMIKTIKHKYLFQGYRFGQWFQELVNMPTRVDESKFSRKFFADISSVKTEDYGLILVAKREDKGVFAGRVPVATVSESQGMTISKRVLICLDQNLFAGGANAAIVAITRSKVGFDFILKGNSLKEVQRMAQKTIWQFIIEGKSIPMERIVNMNPGASFYESPLDVGNSSIQDKASNDLFIMPFINLAEEEVDPEEVVGDVIQPVEWFKCHVPVFDTDPTLAEIFDKVAAKEKREFQSVLGLSNQFLDMEKNGCKIDILPFARQNVFPHHQASDDVTFWAGVQKRIRKSNWRREKSKFEEFESQGKELLQEFISMLPFEFKVNIKEIEDGEKSFLEKRKLKSEKMWANHSERSDIDWKLDHAFLFMKSQYCTKEGKMFTEAKAGQTLACFQHIVLFRFGPMLRAIESAFLRSCGDSYYIHSGKNFFCLDSFVTKNASVFDGFSIESDYTAFDSSQDHVILAFEMALLQYLGVSKEFQLDYLRLKLTLGCRLGSLAIMRFTGEFCTFLFNTFANMLFTQLKYKIDPRRHRILFAGDDMCSLSSLKRRRGERATRLMKSFSLTAVEEVRKFPMFCGWYLSPYGIIKSPKLLWARIKMMSERQLLKECVDNYLFEAIFAYRLGERLYTILKEEDFEYHYLVIRFFVRNSKLLTGLSKSLIFEIGEGIGSKWLSSTSTASSRRSNLQTSKLMLSRPQSFTRMQPFSNQTCLIASKGLNQTSRFPLDLVTASSCLISNCLMTPKLIQSGRKATSTNTYTMESSWLGSKQCCQTLEAWKGESLYMMEPAWIRKEATFARIFSSLSLTVATLVSGQSTVCLPQTQIWPKGLDFVWTLIVHNMNRTLSCLLLTLELHTDASTLQGFWKPKLAIQDGLHRQSAAVKHLNSMRKSRWPSWIADPRCFWKKVHQTCTLKRDCSEVTRLEGHAQFPLKGGQTQGCKKREDLGPSRLELKDLEKMSLEDVLQQARRHRVGVYLWKTHIDPAKELLTVPPPEGFKEGESFEGKELYLLLCNHYCKYLFGNIAVFGSSDKTQFPAVGFDTPPVHYNLTTTPKEGETDEGRKARAGSSGEKTKIWRIDLSNVVPELKTFAATSRQNSLNECTFRKLCEPFADLAREFLHERWSKGLATNIYKKWPKAFEKSPWVAFDFATGLKMNRLTPDEKQVIDRMTKRLFRTEGQKGVFEAGSESNLELEG</sequence>
<protein>
    <recommendedName>
        <fullName>Genome polyprotein</fullName>
    </recommendedName>
    <alternativeName>
        <fullName>241 kDa polyprotein</fullName>
    </alternativeName>
    <alternativeName>
        <fullName>ORF1 polyprotein</fullName>
    </alternativeName>
    <component>
        <recommendedName>
            <fullName>Putative RNA-directed RNA polymerase/helicase</fullName>
            <ecNumber>2.7.7.48</ecNumber>
            <ecNumber>3.6.4.13</ecNumber>
        </recommendedName>
    </component>
    <component>
        <recommendedName>
            <fullName>Coat protein</fullName>
        </recommendedName>
    </component>
</protein>
<evidence type="ECO:0000255" key="1"/>
<evidence type="ECO:0000255" key="2">
    <source>
        <dbReference type="PROSITE-ProRule" id="PRU00539"/>
    </source>
</evidence>
<evidence type="ECO:0000255" key="3">
    <source>
        <dbReference type="PROSITE-ProRule" id="PRU01079"/>
    </source>
</evidence>
<evidence type="ECO:0000256" key="4">
    <source>
        <dbReference type="SAM" id="MobiDB-lite"/>
    </source>
</evidence>
<evidence type="ECO:0000305" key="5"/>
<accession>P36309</accession>
<proteinExistence type="predicted"/>
<organismHost>
    <name type="scientific">Malus sylvestris</name>
    <name type="common">European crab apple</name>
    <dbReference type="NCBI Taxonomy" id="3752"/>
</organismHost>
<dbReference type="EC" id="2.7.7.48"/>
<dbReference type="EC" id="3.6.4.13"/>
<dbReference type="EMBL" id="D14995">
    <property type="protein sequence ID" value="BAA03639.1"/>
    <property type="molecule type" value="Genomic_RNA"/>
</dbReference>
<dbReference type="PIR" id="A44059">
    <property type="entry name" value="A44059"/>
</dbReference>
<dbReference type="RefSeq" id="NP_044335.1">
    <property type="nucleotide sequence ID" value="NC_001749.2"/>
</dbReference>
<dbReference type="GeneID" id="1494893"/>
<dbReference type="KEGG" id="vg:1494893"/>
<dbReference type="Proteomes" id="UP000000396">
    <property type="component" value="Segment"/>
</dbReference>
<dbReference type="GO" id="GO:0019028">
    <property type="term" value="C:viral capsid"/>
    <property type="evidence" value="ECO:0007669"/>
    <property type="project" value="UniProtKB-KW"/>
</dbReference>
<dbReference type="GO" id="GO:0005524">
    <property type="term" value="F:ATP binding"/>
    <property type="evidence" value="ECO:0007669"/>
    <property type="project" value="UniProtKB-KW"/>
</dbReference>
<dbReference type="GO" id="GO:0016887">
    <property type="term" value="F:ATP hydrolysis activity"/>
    <property type="evidence" value="ECO:0007669"/>
    <property type="project" value="RHEA"/>
</dbReference>
<dbReference type="GO" id="GO:0008174">
    <property type="term" value="F:mRNA methyltransferase activity"/>
    <property type="evidence" value="ECO:0007669"/>
    <property type="project" value="InterPro"/>
</dbReference>
<dbReference type="GO" id="GO:0003723">
    <property type="term" value="F:RNA binding"/>
    <property type="evidence" value="ECO:0007669"/>
    <property type="project" value="InterPro"/>
</dbReference>
<dbReference type="GO" id="GO:0003724">
    <property type="term" value="F:RNA helicase activity"/>
    <property type="evidence" value="ECO:0007669"/>
    <property type="project" value="UniProtKB-EC"/>
</dbReference>
<dbReference type="GO" id="GO:0003968">
    <property type="term" value="F:RNA-directed RNA polymerase activity"/>
    <property type="evidence" value="ECO:0007669"/>
    <property type="project" value="UniProtKB-KW"/>
</dbReference>
<dbReference type="GO" id="GO:0006351">
    <property type="term" value="P:DNA-templated transcription"/>
    <property type="evidence" value="ECO:0007669"/>
    <property type="project" value="InterPro"/>
</dbReference>
<dbReference type="GO" id="GO:0016556">
    <property type="term" value="P:mRNA modification"/>
    <property type="evidence" value="ECO:0007669"/>
    <property type="project" value="InterPro"/>
</dbReference>
<dbReference type="GO" id="GO:0006396">
    <property type="term" value="P:RNA processing"/>
    <property type="evidence" value="ECO:0007669"/>
    <property type="project" value="InterPro"/>
</dbReference>
<dbReference type="GO" id="GO:0039694">
    <property type="term" value="P:viral RNA genome replication"/>
    <property type="evidence" value="ECO:0007669"/>
    <property type="project" value="InterPro"/>
</dbReference>
<dbReference type="Gene3D" id="3.40.50.300">
    <property type="entry name" value="P-loop containing nucleotide triphosphate hydrolases"/>
    <property type="match status" value="1"/>
</dbReference>
<dbReference type="InterPro" id="IPR027351">
    <property type="entry name" value="(+)RNA_virus_helicase_core_dom"/>
</dbReference>
<dbReference type="InterPro" id="IPR002588">
    <property type="entry name" value="Alphavirus-like_MT_dom"/>
</dbReference>
<dbReference type="InterPro" id="IPR008879">
    <property type="entry name" value="Coat_protein_tricho/vitivirus"/>
</dbReference>
<dbReference type="InterPro" id="IPR043502">
    <property type="entry name" value="DNA/RNA_pol_sf"/>
</dbReference>
<dbReference type="InterPro" id="IPR008745">
    <property type="entry name" value="DUF1717"/>
</dbReference>
<dbReference type="InterPro" id="IPR027417">
    <property type="entry name" value="P-loop_NTPase"/>
</dbReference>
<dbReference type="InterPro" id="IPR001788">
    <property type="entry name" value="RNA-dep_RNA_pol_alsuvir"/>
</dbReference>
<dbReference type="InterPro" id="IPR007094">
    <property type="entry name" value="RNA-dir_pol_PSvirus"/>
</dbReference>
<dbReference type="Pfam" id="PF05414">
    <property type="entry name" value="DUF1717"/>
    <property type="match status" value="1"/>
</dbReference>
<dbReference type="Pfam" id="PF00978">
    <property type="entry name" value="RdRP_2"/>
    <property type="match status" value="1"/>
</dbReference>
<dbReference type="Pfam" id="PF05892">
    <property type="entry name" value="Tricho_coat"/>
    <property type="match status" value="1"/>
</dbReference>
<dbReference type="Pfam" id="PF01443">
    <property type="entry name" value="Viral_helicase1"/>
    <property type="match status" value="2"/>
</dbReference>
<dbReference type="Pfam" id="PF01660">
    <property type="entry name" value="Vmethyltransf"/>
    <property type="match status" value="1"/>
</dbReference>
<dbReference type="SUPFAM" id="SSF56672">
    <property type="entry name" value="DNA/RNA polymerases"/>
    <property type="match status" value="1"/>
</dbReference>
<dbReference type="PROSITE" id="PS51743">
    <property type="entry name" value="ALPHAVIRUS_MT"/>
    <property type="match status" value="1"/>
</dbReference>
<dbReference type="PROSITE" id="PS51657">
    <property type="entry name" value="PSRV_HELICASE"/>
    <property type="match status" value="1"/>
</dbReference>
<dbReference type="PROSITE" id="PS50507">
    <property type="entry name" value="RDRP_SSRNA_POS"/>
    <property type="match status" value="1"/>
</dbReference>
<name>POLG_ASGVP</name>